<keyword id="KW-1003">Cell membrane</keyword>
<keyword id="KW-0903">Direct protein sequencing</keyword>
<keyword id="KW-0406">Ion transport</keyword>
<keyword id="KW-0472">Membrane</keyword>
<keyword id="KW-0915">Sodium</keyword>
<keyword id="KW-0739">Sodium transport</keyword>
<keyword id="KW-1278">Translocase</keyword>
<keyword id="KW-0812">Transmembrane</keyword>
<keyword id="KW-1133">Transmembrane helix</keyword>
<keyword id="KW-0813">Transport</keyword>
<sequence length="433" mass="44878">MESLNALIQGLGLMHLGAGQAIMLLVSLLLLWLAIAKKFEPLLLLPIGFGGLLSNIPEAGLALTALESLLAHRDPAQLAVIAAKLHCAPDVHAIKAALALALPSVQGQMESLAVDMGYSAGVLAIFYKVAIGSGIAPLVIFMGVGAMTDFGPLLANPRTLLLGAAAQFGIFATVLGALTLNYFGIISFTLPQAAAIGIIGGADGPTAIYLSGKLAPELLGAIAVAAYSYMALVPLIQPPIMKALTTDKERKIRMVQLRTVSKREKILFPAVLLLLVALLLPDAAPLLGMFCFGNLMRESGVVERLSDTVQNALINIVTIFLGLSVGAKLVADKFLQPQTLGILVLGVIAFCVGTAAGVLMAKLMNVFSRHKINPLIGSAGVSAVPMAARVSNKVGLEADGQNFLLMHAMGPNVAGVIGSAIAAGVMLKYVLAM</sequence>
<evidence type="ECO:0000255" key="1"/>
<evidence type="ECO:0000305" key="2"/>
<comment type="function">
    <text>Catalyzes the decarboxylation of oxaloacetate coupled to Na(+) translocation.</text>
</comment>
<comment type="catalytic activity">
    <reaction>
        <text>oxaloacetate + 2 Na(+)(in) + H(+) = pyruvate + 2 Na(+)(out) + CO2</text>
        <dbReference type="Rhea" id="RHEA:57724"/>
        <dbReference type="ChEBI" id="CHEBI:15361"/>
        <dbReference type="ChEBI" id="CHEBI:15378"/>
        <dbReference type="ChEBI" id="CHEBI:16452"/>
        <dbReference type="ChEBI" id="CHEBI:16526"/>
        <dbReference type="ChEBI" id="CHEBI:29101"/>
        <dbReference type="EC" id="7.2.4.2"/>
    </reaction>
</comment>
<comment type="cofactor">
    <cofactor>
        <name>Na(+)</name>
        <dbReference type="ChEBI" id="CHEBI:29101"/>
    </cofactor>
</comment>
<comment type="subunit">
    <text>Heterotrimer of an alpha, a beta and a gamma subunit.</text>
</comment>
<comment type="subcellular location">
    <subcellularLocation>
        <location>Cell membrane</location>
        <topology>Multi-pass membrane protein</topology>
    </subcellularLocation>
</comment>
<comment type="PTM">
    <text>The N-terminus is blocked.</text>
</comment>
<comment type="similarity">
    <text evidence="2">Belongs to the GcdB/MmdB/OadB family.</text>
</comment>
<comment type="sequence caution" evidence="2">
    <conflict type="erroneous initiation">
        <sequence resource="EMBL-CDS" id="AAA25118"/>
    </conflict>
    <text>Truncated N-terminus.</text>
</comment>
<accession>P13156</accession>
<organism>
    <name type="scientific">Klebsiella pneumoniae</name>
    <dbReference type="NCBI Taxonomy" id="573"/>
    <lineage>
        <taxon>Bacteria</taxon>
        <taxon>Pseudomonadati</taxon>
        <taxon>Pseudomonadota</taxon>
        <taxon>Gammaproteobacteria</taxon>
        <taxon>Enterobacterales</taxon>
        <taxon>Enterobacteriaceae</taxon>
        <taxon>Klebsiella/Raoultella group</taxon>
        <taxon>Klebsiella</taxon>
        <taxon>Klebsiella pneumoniae complex</taxon>
    </lineage>
</organism>
<protein>
    <recommendedName>
        <fullName>Oxaloacetate decarboxylase beta chain</fullName>
        <ecNumber>7.2.4.2</ecNumber>
    </recommendedName>
</protein>
<gene>
    <name type="primary">oadB</name>
</gene>
<dbReference type="EC" id="7.2.4.2"/>
<dbReference type="EMBL" id="AH000911">
    <property type="protein sequence ID" value="AAA25118.1"/>
    <property type="status" value="ALT_INIT"/>
    <property type="molecule type" value="Genomic_DNA"/>
</dbReference>
<dbReference type="PIR" id="B36505">
    <property type="entry name" value="B36505"/>
</dbReference>
<dbReference type="RefSeq" id="WP_074193734.1">
    <property type="nucleotide sequence ID" value="NZ_JALJQQ010000043.1"/>
</dbReference>
<dbReference type="SMR" id="P13156"/>
<dbReference type="GO" id="GO:0005886">
    <property type="term" value="C:plasma membrane"/>
    <property type="evidence" value="ECO:0007669"/>
    <property type="project" value="UniProtKB-SubCell"/>
</dbReference>
<dbReference type="GO" id="GO:0015451">
    <property type="term" value="F:decarboxylation-driven active transmembrane transporter activity"/>
    <property type="evidence" value="ECO:0007669"/>
    <property type="project" value="UniProtKB-EC"/>
</dbReference>
<dbReference type="GO" id="GO:0016829">
    <property type="term" value="F:lyase activity"/>
    <property type="evidence" value="ECO:0007669"/>
    <property type="project" value="InterPro"/>
</dbReference>
<dbReference type="GO" id="GO:0006814">
    <property type="term" value="P:sodium ion transport"/>
    <property type="evidence" value="ECO:0007669"/>
    <property type="project" value="UniProtKB-KW"/>
</dbReference>
<dbReference type="InterPro" id="IPR005661">
    <property type="entry name" value="OadB_MmdB"/>
</dbReference>
<dbReference type="NCBIfam" id="TIGR01109">
    <property type="entry name" value="Na_pump_decarbB"/>
    <property type="match status" value="1"/>
</dbReference>
<dbReference type="NCBIfam" id="NF012019">
    <property type="entry name" value="PRK15475.1"/>
    <property type="match status" value="1"/>
</dbReference>
<dbReference type="NCBIfam" id="NF012020">
    <property type="entry name" value="PRK15476.1"/>
    <property type="match status" value="1"/>
</dbReference>
<dbReference type="NCBIfam" id="NF012021">
    <property type="entry name" value="PRK15477.1"/>
    <property type="match status" value="1"/>
</dbReference>
<dbReference type="PANTHER" id="PTHR35806">
    <property type="entry name" value="OXALOACETATE DECARBOXYLASE BETA CHAIN 2"/>
    <property type="match status" value="1"/>
</dbReference>
<dbReference type="PANTHER" id="PTHR35806:SF1">
    <property type="entry name" value="OXALOACETATE DECARBOXYLASE BETA CHAIN 2"/>
    <property type="match status" value="1"/>
</dbReference>
<dbReference type="Pfam" id="PF03977">
    <property type="entry name" value="OAD_beta"/>
    <property type="match status" value="1"/>
</dbReference>
<dbReference type="PIRSF" id="PIRSF015658">
    <property type="entry name" value="MmdB_OadB"/>
    <property type="match status" value="1"/>
</dbReference>
<feature type="chain" id="PRO_0000218563" description="Oxaloacetate decarboxylase beta chain">
    <location>
        <begin position="1"/>
        <end position="433"/>
    </location>
</feature>
<feature type="transmembrane region" description="Helical" evidence="1">
    <location>
        <begin position="16"/>
        <end position="36"/>
    </location>
</feature>
<feature type="transmembrane region" description="Helical" evidence="1">
    <location>
        <begin position="122"/>
        <end position="142"/>
    </location>
</feature>
<feature type="transmembrane region" description="Helical" evidence="1">
    <location>
        <begin position="159"/>
        <end position="178"/>
    </location>
</feature>
<feature type="transmembrane region" description="Helical" evidence="1">
    <location>
        <begin position="180"/>
        <end position="202"/>
    </location>
</feature>
<feature type="transmembrane region" description="Helical" evidence="1">
    <location>
        <begin position="222"/>
        <end position="244"/>
    </location>
</feature>
<feature type="transmembrane region" description="Helical" evidence="1">
    <location>
        <begin position="266"/>
        <end position="286"/>
    </location>
</feature>
<feature type="transmembrane region" description="Helical" evidence="1">
    <location>
        <begin position="308"/>
        <end position="327"/>
    </location>
</feature>
<feature type="transmembrane region" description="Helical" evidence="1">
    <location>
        <begin position="339"/>
        <end position="361"/>
    </location>
</feature>
<feature type="transmembrane region" description="Helical" evidence="1">
    <location>
        <begin position="409"/>
        <end position="431"/>
    </location>
</feature>
<reference key="1">
    <citation type="journal article" date="1989" name="J. Biol. Chem.">
        <title>The sodium ion translocating oxaloacetate decarboxylase of Klebsiella pneumoniae. Sequence of the integral membrane-bound subunits beta and gamma.</title>
        <authorList>
            <person name="Laussermair E."/>
            <person name="Schwarz E."/>
            <person name="Oesterhelt D."/>
            <person name="Reinke H."/>
            <person name="Beyreuther K."/>
            <person name="Dimroth P."/>
        </authorList>
    </citation>
    <scope>NUCLEOTIDE SEQUENCE [GENOMIC DNA]</scope>
    <scope>PARTIAL PROTEIN SEQUENCE</scope>
</reference>
<name>OADB_KLEPN</name>
<proteinExistence type="evidence at protein level"/>